<dbReference type="EMBL" id="CP001120">
    <property type="protein sequence ID" value="ACF69544.1"/>
    <property type="molecule type" value="Genomic_DNA"/>
</dbReference>
<dbReference type="SMR" id="B4TJ08"/>
<dbReference type="KEGG" id="seh:SeHA_C3583"/>
<dbReference type="HOGENOM" id="CLU_070525_1_1_6"/>
<dbReference type="Proteomes" id="UP000001866">
    <property type="component" value="Chromosome"/>
</dbReference>
<dbReference type="GO" id="GO:0005829">
    <property type="term" value="C:cytosol"/>
    <property type="evidence" value="ECO:0007669"/>
    <property type="project" value="TreeGrafter"/>
</dbReference>
<dbReference type="GO" id="GO:0000028">
    <property type="term" value="P:ribosomal small subunit assembly"/>
    <property type="evidence" value="ECO:0007669"/>
    <property type="project" value="TreeGrafter"/>
</dbReference>
<dbReference type="GO" id="GO:0006412">
    <property type="term" value="P:translation"/>
    <property type="evidence" value="ECO:0007669"/>
    <property type="project" value="TreeGrafter"/>
</dbReference>
<dbReference type="CDD" id="cd01734">
    <property type="entry name" value="YlxS_C"/>
    <property type="match status" value="1"/>
</dbReference>
<dbReference type="FunFam" id="2.30.30.180:FF:000001">
    <property type="entry name" value="Ribosome maturation factor RimP"/>
    <property type="match status" value="1"/>
</dbReference>
<dbReference type="FunFam" id="3.30.300.70:FF:000001">
    <property type="entry name" value="Ribosome maturation factor RimP"/>
    <property type="match status" value="1"/>
</dbReference>
<dbReference type="Gene3D" id="2.30.30.180">
    <property type="entry name" value="Ribosome maturation factor RimP, C-terminal domain"/>
    <property type="match status" value="1"/>
</dbReference>
<dbReference type="Gene3D" id="3.30.300.70">
    <property type="entry name" value="RimP-like superfamily, N-terminal"/>
    <property type="match status" value="1"/>
</dbReference>
<dbReference type="HAMAP" id="MF_01077">
    <property type="entry name" value="RimP"/>
    <property type="match status" value="1"/>
</dbReference>
<dbReference type="InterPro" id="IPR003728">
    <property type="entry name" value="Ribosome_maturation_RimP"/>
</dbReference>
<dbReference type="InterPro" id="IPR028998">
    <property type="entry name" value="RimP_C"/>
</dbReference>
<dbReference type="InterPro" id="IPR036847">
    <property type="entry name" value="RimP_C_sf"/>
</dbReference>
<dbReference type="InterPro" id="IPR028989">
    <property type="entry name" value="RimP_N"/>
</dbReference>
<dbReference type="InterPro" id="IPR035956">
    <property type="entry name" value="RimP_N_sf"/>
</dbReference>
<dbReference type="NCBIfam" id="NF000927">
    <property type="entry name" value="PRK00092.1-1"/>
    <property type="match status" value="1"/>
</dbReference>
<dbReference type="PANTHER" id="PTHR33867">
    <property type="entry name" value="RIBOSOME MATURATION FACTOR RIMP"/>
    <property type="match status" value="1"/>
</dbReference>
<dbReference type="PANTHER" id="PTHR33867:SF1">
    <property type="entry name" value="RIBOSOME MATURATION FACTOR RIMP"/>
    <property type="match status" value="1"/>
</dbReference>
<dbReference type="Pfam" id="PF17384">
    <property type="entry name" value="DUF150_C"/>
    <property type="match status" value="1"/>
</dbReference>
<dbReference type="Pfam" id="PF02576">
    <property type="entry name" value="RimP_N"/>
    <property type="match status" value="1"/>
</dbReference>
<dbReference type="SUPFAM" id="SSF74942">
    <property type="entry name" value="YhbC-like, C-terminal domain"/>
    <property type="match status" value="1"/>
</dbReference>
<dbReference type="SUPFAM" id="SSF75420">
    <property type="entry name" value="YhbC-like, N-terminal domain"/>
    <property type="match status" value="1"/>
</dbReference>
<name>RIMP_SALHS</name>
<keyword id="KW-0963">Cytoplasm</keyword>
<keyword id="KW-0690">Ribosome biogenesis</keyword>
<feature type="chain" id="PRO_0000384762" description="Ribosome maturation factor RimP">
    <location>
        <begin position="1"/>
        <end position="154"/>
    </location>
</feature>
<evidence type="ECO:0000255" key="1">
    <source>
        <dbReference type="HAMAP-Rule" id="MF_01077"/>
    </source>
</evidence>
<gene>
    <name evidence="1" type="primary">rimP</name>
    <name type="ordered locus">SeHA_C3583</name>
</gene>
<accession>B4TJ08</accession>
<reference key="1">
    <citation type="journal article" date="2011" name="J. Bacteriol.">
        <title>Comparative genomics of 28 Salmonella enterica isolates: evidence for CRISPR-mediated adaptive sublineage evolution.</title>
        <authorList>
            <person name="Fricke W.F."/>
            <person name="Mammel M.K."/>
            <person name="McDermott P.F."/>
            <person name="Tartera C."/>
            <person name="White D.G."/>
            <person name="Leclerc J.E."/>
            <person name="Ravel J."/>
            <person name="Cebula T.A."/>
        </authorList>
    </citation>
    <scope>NUCLEOTIDE SEQUENCE [LARGE SCALE GENOMIC DNA]</scope>
    <source>
        <strain>SL476</strain>
    </source>
</reference>
<proteinExistence type="inferred from homology"/>
<sequence>MGVGLSTLEQKLTEMITAPVEALGYELVGIEFIRGRTSTLRIYIDSEDGINVDDCADVSHQVSAVLDVEDPISVAYNLEVSSPGLDRPMFTADHYARFQGEEVALVLRMAVQNRRKWQGIIKAVDGEMITVTVEGKDEVFALSNIQKANLVPHF</sequence>
<comment type="function">
    <text evidence="1">Required for maturation of 30S ribosomal subunits.</text>
</comment>
<comment type="subcellular location">
    <subcellularLocation>
        <location evidence="1">Cytoplasm</location>
    </subcellularLocation>
</comment>
<comment type="similarity">
    <text evidence="1">Belongs to the RimP family.</text>
</comment>
<protein>
    <recommendedName>
        <fullName evidence="1">Ribosome maturation factor RimP</fullName>
    </recommendedName>
</protein>
<organism>
    <name type="scientific">Salmonella heidelberg (strain SL476)</name>
    <dbReference type="NCBI Taxonomy" id="454169"/>
    <lineage>
        <taxon>Bacteria</taxon>
        <taxon>Pseudomonadati</taxon>
        <taxon>Pseudomonadota</taxon>
        <taxon>Gammaproteobacteria</taxon>
        <taxon>Enterobacterales</taxon>
        <taxon>Enterobacteriaceae</taxon>
        <taxon>Salmonella</taxon>
    </lineage>
</organism>